<comment type="function">
    <text evidence="1">Binds directly to 23S ribosomal RNA and is necessary for the in vitro assembly process of the 50S ribosomal subunit. It is not involved in the protein synthesizing functions of that subunit.</text>
</comment>
<comment type="similarity">
    <text evidence="1">Belongs to the bacterial ribosomal protein bL20 family.</text>
</comment>
<evidence type="ECO:0000255" key="1">
    <source>
        <dbReference type="HAMAP-Rule" id="MF_00382"/>
    </source>
</evidence>
<evidence type="ECO:0000305" key="2"/>
<accession>Q3APW2</accession>
<dbReference type="EMBL" id="CP000108">
    <property type="protein sequence ID" value="ABB28963.1"/>
    <property type="molecule type" value="Genomic_DNA"/>
</dbReference>
<dbReference type="SMR" id="Q3APW2"/>
<dbReference type="STRING" id="340177.Cag_1712"/>
<dbReference type="KEGG" id="cch:Cag_1712"/>
<dbReference type="eggNOG" id="COG0292">
    <property type="taxonomic scope" value="Bacteria"/>
</dbReference>
<dbReference type="HOGENOM" id="CLU_123265_0_1_10"/>
<dbReference type="OrthoDB" id="9808966at2"/>
<dbReference type="GO" id="GO:1990904">
    <property type="term" value="C:ribonucleoprotein complex"/>
    <property type="evidence" value="ECO:0007669"/>
    <property type="project" value="UniProtKB-KW"/>
</dbReference>
<dbReference type="GO" id="GO:0005840">
    <property type="term" value="C:ribosome"/>
    <property type="evidence" value="ECO:0007669"/>
    <property type="project" value="UniProtKB-KW"/>
</dbReference>
<dbReference type="GO" id="GO:0019843">
    <property type="term" value="F:rRNA binding"/>
    <property type="evidence" value="ECO:0007669"/>
    <property type="project" value="UniProtKB-UniRule"/>
</dbReference>
<dbReference type="GO" id="GO:0003735">
    <property type="term" value="F:structural constituent of ribosome"/>
    <property type="evidence" value="ECO:0007669"/>
    <property type="project" value="InterPro"/>
</dbReference>
<dbReference type="GO" id="GO:0000027">
    <property type="term" value="P:ribosomal large subunit assembly"/>
    <property type="evidence" value="ECO:0007669"/>
    <property type="project" value="UniProtKB-UniRule"/>
</dbReference>
<dbReference type="GO" id="GO:0006412">
    <property type="term" value="P:translation"/>
    <property type="evidence" value="ECO:0007669"/>
    <property type="project" value="InterPro"/>
</dbReference>
<dbReference type="CDD" id="cd07026">
    <property type="entry name" value="Ribosomal_L20"/>
    <property type="match status" value="1"/>
</dbReference>
<dbReference type="FunFam" id="1.10.1900.20:FF:000001">
    <property type="entry name" value="50S ribosomal protein L20"/>
    <property type="match status" value="1"/>
</dbReference>
<dbReference type="Gene3D" id="6.10.160.10">
    <property type="match status" value="1"/>
</dbReference>
<dbReference type="Gene3D" id="1.10.1900.20">
    <property type="entry name" value="Ribosomal protein L20"/>
    <property type="match status" value="1"/>
</dbReference>
<dbReference type="HAMAP" id="MF_00382">
    <property type="entry name" value="Ribosomal_bL20"/>
    <property type="match status" value="1"/>
</dbReference>
<dbReference type="InterPro" id="IPR005813">
    <property type="entry name" value="Ribosomal_bL20"/>
</dbReference>
<dbReference type="InterPro" id="IPR049946">
    <property type="entry name" value="RIBOSOMAL_L20_CS"/>
</dbReference>
<dbReference type="InterPro" id="IPR035566">
    <property type="entry name" value="Ribosomal_protein_bL20_C"/>
</dbReference>
<dbReference type="NCBIfam" id="TIGR01032">
    <property type="entry name" value="rplT_bact"/>
    <property type="match status" value="1"/>
</dbReference>
<dbReference type="PANTHER" id="PTHR10986">
    <property type="entry name" value="39S RIBOSOMAL PROTEIN L20"/>
    <property type="match status" value="1"/>
</dbReference>
<dbReference type="Pfam" id="PF00453">
    <property type="entry name" value="Ribosomal_L20"/>
    <property type="match status" value="1"/>
</dbReference>
<dbReference type="PRINTS" id="PR00062">
    <property type="entry name" value="RIBOSOMALL20"/>
</dbReference>
<dbReference type="SUPFAM" id="SSF74731">
    <property type="entry name" value="Ribosomal protein L20"/>
    <property type="match status" value="1"/>
</dbReference>
<dbReference type="PROSITE" id="PS00937">
    <property type="entry name" value="RIBOSOMAL_L20"/>
    <property type="match status" value="1"/>
</dbReference>
<proteinExistence type="inferred from homology"/>
<reference key="1">
    <citation type="submission" date="2005-08" db="EMBL/GenBank/DDBJ databases">
        <title>Complete sequence of Chlorobium chlorochromatii CaD3.</title>
        <authorList>
            <consortium name="US DOE Joint Genome Institute"/>
            <person name="Copeland A."/>
            <person name="Lucas S."/>
            <person name="Lapidus A."/>
            <person name="Barry K."/>
            <person name="Detter J.C."/>
            <person name="Glavina T."/>
            <person name="Hammon N."/>
            <person name="Israni S."/>
            <person name="Pitluck S."/>
            <person name="Bryant D."/>
            <person name="Schmutz J."/>
            <person name="Larimer F."/>
            <person name="Land M."/>
            <person name="Kyrpides N."/>
            <person name="Ivanova N."/>
            <person name="Richardson P."/>
        </authorList>
    </citation>
    <scope>NUCLEOTIDE SEQUENCE [LARGE SCALE GENOMIC DNA]</scope>
    <source>
        <strain>CaD3</strain>
    </source>
</reference>
<feature type="chain" id="PRO_0000243671" description="Large ribosomal subunit protein bL20">
    <location>
        <begin position="1"/>
        <end position="115"/>
    </location>
</feature>
<gene>
    <name evidence="1" type="primary">rplT</name>
    <name type="ordered locus">Cag_1712</name>
</gene>
<protein>
    <recommendedName>
        <fullName evidence="1">Large ribosomal subunit protein bL20</fullName>
    </recommendedName>
    <alternativeName>
        <fullName evidence="2">50S ribosomal protein L20</fullName>
    </alternativeName>
</protein>
<name>RL20_CHLCH</name>
<organism>
    <name type="scientific">Chlorobium chlorochromatii (strain CaD3)</name>
    <dbReference type="NCBI Taxonomy" id="340177"/>
    <lineage>
        <taxon>Bacteria</taxon>
        <taxon>Pseudomonadati</taxon>
        <taxon>Chlorobiota</taxon>
        <taxon>Chlorobiia</taxon>
        <taxon>Chlorobiales</taxon>
        <taxon>Chlorobiaceae</taxon>
        <taxon>Chlorobium/Pelodictyon group</taxon>
        <taxon>Chlorobium</taxon>
    </lineage>
</organism>
<sequence length="115" mass="12871">MPKANNAVASRARRKRILKKAKGFWGARGNVLTVVKHSVDKAEQYAYRDRRAKKRTFRSLWIMRINAAARLNGTTYSQLINGMAKNNIQIDRKALAEIAVKDAAAFSAIVQAANK</sequence>
<keyword id="KW-0687">Ribonucleoprotein</keyword>
<keyword id="KW-0689">Ribosomal protein</keyword>
<keyword id="KW-0694">RNA-binding</keyword>
<keyword id="KW-0699">rRNA-binding</keyword>